<comment type="function">
    <text evidence="1">Catalyzes the stereoinversion of LL-2,6-diaminopimelate (L,L-DAP) to meso-diaminopimelate (meso-DAP), a precursor of L-lysine and an essential component of the bacterial peptidoglycan.</text>
</comment>
<comment type="catalytic activity">
    <reaction evidence="1">
        <text>(2S,6S)-2,6-diaminopimelate = meso-2,6-diaminopimelate</text>
        <dbReference type="Rhea" id="RHEA:15393"/>
        <dbReference type="ChEBI" id="CHEBI:57609"/>
        <dbReference type="ChEBI" id="CHEBI:57791"/>
        <dbReference type="EC" id="5.1.1.7"/>
    </reaction>
</comment>
<comment type="pathway">
    <text evidence="1">Amino-acid biosynthesis; L-lysine biosynthesis via DAP pathway; DL-2,6-diaminopimelate from LL-2,6-diaminopimelate: step 1/1.</text>
</comment>
<comment type="subunit">
    <text evidence="1">Homodimer.</text>
</comment>
<comment type="subcellular location">
    <subcellularLocation>
        <location evidence="1">Cytoplasm</location>
    </subcellularLocation>
</comment>
<comment type="similarity">
    <text evidence="1">Belongs to the diaminopimelate epimerase family.</text>
</comment>
<evidence type="ECO:0000255" key="1">
    <source>
        <dbReference type="HAMAP-Rule" id="MF_00197"/>
    </source>
</evidence>
<sequence length="274" mass="30224">MQFSKMHGLGNDFMVVDAVTQNVYFSPEMIRRLSDRHCGVGFDQLLVVEPPYDPELDFHYRIFNADGSEVAQCGNGARCFARFVRMKNLTNKRDIHVSTQTGRMVLTVTEDDSVRVNMGEPNFDPQQVLFRAARVEKTYIMRAAEQTVLCGVVSMGNPHCVIAVDSVDNAPVATLGPVLESHERFPERANIGFMQVLNRGHIRLRVYERGAGETQACGSGACAAVAVGISQGQLAEQVQVELTGGRLAISWRGPGHPLYMTGPATHIYDGFIHL</sequence>
<keyword id="KW-0028">Amino-acid biosynthesis</keyword>
<keyword id="KW-0963">Cytoplasm</keyword>
<keyword id="KW-0413">Isomerase</keyword>
<keyword id="KW-0457">Lysine biosynthesis</keyword>
<gene>
    <name evidence="1" type="primary">dapF</name>
    <name type="ordered locus">SG2346</name>
</gene>
<proteinExistence type="inferred from homology"/>
<name>DAPF_SODGM</name>
<protein>
    <recommendedName>
        <fullName evidence="1">Diaminopimelate epimerase</fullName>
        <shortName evidence="1">DAP epimerase</shortName>
        <ecNumber evidence="1">5.1.1.7</ecNumber>
    </recommendedName>
    <alternativeName>
        <fullName evidence="1">PLP-independent amino acid racemase</fullName>
    </alternativeName>
</protein>
<dbReference type="EC" id="5.1.1.7" evidence="1"/>
<dbReference type="EMBL" id="AP008232">
    <property type="protein sequence ID" value="BAE75621.1"/>
    <property type="molecule type" value="Genomic_DNA"/>
</dbReference>
<dbReference type="RefSeq" id="WP_011412153.1">
    <property type="nucleotide sequence ID" value="NC_007712.1"/>
</dbReference>
<dbReference type="SMR" id="Q2NQF4"/>
<dbReference type="STRING" id="343509.SG2346"/>
<dbReference type="KEGG" id="sgl:SG2346"/>
<dbReference type="eggNOG" id="COG0253">
    <property type="taxonomic scope" value="Bacteria"/>
</dbReference>
<dbReference type="HOGENOM" id="CLU_053306_1_1_6"/>
<dbReference type="OrthoDB" id="9805408at2"/>
<dbReference type="BioCyc" id="SGLO343509:SGP1_RS21310-MONOMER"/>
<dbReference type="UniPathway" id="UPA00034">
    <property type="reaction ID" value="UER00025"/>
</dbReference>
<dbReference type="Proteomes" id="UP000001932">
    <property type="component" value="Chromosome"/>
</dbReference>
<dbReference type="GO" id="GO:0005829">
    <property type="term" value="C:cytosol"/>
    <property type="evidence" value="ECO:0007669"/>
    <property type="project" value="TreeGrafter"/>
</dbReference>
<dbReference type="GO" id="GO:0008837">
    <property type="term" value="F:diaminopimelate epimerase activity"/>
    <property type="evidence" value="ECO:0007669"/>
    <property type="project" value="UniProtKB-UniRule"/>
</dbReference>
<dbReference type="GO" id="GO:0009089">
    <property type="term" value="P:lysine biosynthetic process via diaminopimelate"/>
    <property type="evidence" value="ECO:0007669"/>
    <property type="project" value="UniProtKB-UniRule"/>
</dbReference>
<dbReference type="FunFam" id="3.10.310.10:FF:000001">
    <property type="entry name" value="Diaminopimelate epimerase"/>
    <property type="match status" value="1"/>
</dbReference>
<dbReference type="FunFam" id="3.10.310.10:FF:000002">
    <property type="entry name" value="Diaminopimelate epimerase"/>
    <property type="match status" value="1"/>
</dbReference>
<dbReference type="Gene3D" id="3.10.310.10">
    <property type="entry name" value="Diaminopimelate Epimerase, Chain A, domain 1"/>
    <property type="match status" value="2"/>
</dbReference>
<dbReference type="HAMAP" id="MF_00197">
    <property type="entry name" value="DAP_epimerase"/>
    <property type="match status" value="1"/>
</dbReference>
<dbReference type="InterPro" id="IPR018510">
    <property type="entry name" value="DAP_epimerase_AS"/>
</dbReference>
<dbReference type="InterPro" id="IPR001653">
    <property type="entry name" value="DAP_epimerase_DapF"/>
</dbReference>
<dbReference type="NCBIfam" id="TIGR00652">
    <property type="entry name" value="DapF"/>
    <property type="match status" value="1"/>
</dbReference>
<dbReference type="PANTHER" id="PTHR31689:SF0">
    <property type="entry name" value="DIAMINOPIMELATE EPIMERASE"/>
    <property type="match status" value="1"/>
</dbReference>
<dbReference type="PANTHER" id="PTHR31689">
    <property type="entry name" value="DIAMINOPIMELATE EPIMERASE, CHLOROPLASTIC"/>
    <property type="match status" value="1"/>
</dbReference>
<dbReference type="Pfam" id="PF01678">
    <property type="entry name" value="DAP_epimerase"/>
    <property type="match status" value="2"/>
</dbReference>
<dbReference type="SUPFAM" id="SSF54506">
    <property type="entry name" value="Diaminopimelate epimerase-like"/>
    <property type="match status" value="1"/>
</dbReference>
<dbReference type="PROSITE" id="PS01326">
    <property type="entry name" value="DAP_EPIMERASE"/>
    <property type="match status" value="1"/>
</dbReference>
<reference key="1">
    <citation type="journal article" date="2006" name="Genome Res.">
        <title>Massive genome erosion and functional adaptations provide insights into the symbiotic lifestyle of Sodalis glossinidius in the tsetse host.</title>
        <authorList>
            <person name="Toh H."/>
            <person name="Weiss B.L."/>
            <person name="Perkin S.A.H."/>
            <person name="Yamashita A."/>
            <person name="Oshima K."/>
            <person name="Hattori M."/>
            <person name="Aksoy S."/>
        </authorList>
    </citation>
    <scope>NUCLEOTIDE SEQUENCE [LARGE SCALE GENOMIC DNA]</scope>
    <source>
        <strain>morsitans</strain>
    </source>
</reference>
<feature type="chain" id="PRO_1000011971" description="Diaminopimelate epimerase">
    <location>
        <begin position="1"/>
        <end position="274"/>
    </location>
</feature>
<feature type="active site" description="Proton donor" evidence="1">
    <location>
        <position position="73"/>
    </location>
</feature>
<feature type="active site" description="Proton acceptor" evidence="1">
    <location>
        <position position="217"/>
    </location>
</feature>
<feature type="binding site" evidence="1">
    <location>
        <position position="11"/>
    </location>
    <ligand>
        <name>substrate</name>
    </ligand>
</feature>
<feature type="binding site" evidence="1">
    <location>
        <position position="44"/>
    </location>
    <ligand>
        <name>substrate</name>
    </ligand>
</feature>
<feature type="binding site" evidence="1">
    <location>
        <position position="64"/>
    </location>
    <ligand>
        <name>substrate</name>
    </ligand>
</feature>
<feature type="binding site" evidence="1">
    <location>
        <begin position="74"/>
        <end position="75"/>
    </location>
    <ligand>
        <name>substrate</name>
    </ligand>
</feature>
<feature type="binding site" evidence="1">
    <location>
        <position position="157"/>
    </location>
    <ligand>
        <name>substrate</name>
    </ligand>
</feature>
<feature type="binding site" evidence="1">
    <location>
        <position position="190"/>
    </location>
    <ligand>
        <name>substrate</name>
    </ligand>
</feature>
<feature type="binding site" evidence="1">
    <location>
        <begin position="208"/>
        <end position="209"/>
    </location>
    <ligand>
        <name>substrate</name>
    </ligand>
</feature>
<feature type="binding site" evidence="1">
    <location>
        <begin position="218"/>
        <end position="219"/>
    </location>
    <ligand>
        <name>substrate</name>
    </ligand>
</feature>
<feature type="site" description="Could be important to modulate the pK values of the two catalytic cysteine residues" evidence="1">
    <location>
        <position position="159"/>
    </location>
</feature>
<feature type="site" description="Could be important to modulate the pK values of the two catalytic cysteine residues" evidence="1">
    <location>
        <position position="208"/>
    </location>
</feature>
<feature type="site" description="Important for dimerization" evidence="1">
    <location>
        <position position="268"/>
    </location>
</feature>
<accession>Q2NQF4</accession>
<organism>
    <name type="scientific">Sodalis glossinidius (strain morsitans)</name>
    <dbReference type="NCBI Taxonomy" id="343509"/>
    <lineage>
        <taxon>Bacteria</taxon>
        <taxon>Pseudomonadati</taxon>
        <taxon>Pseudomonadota</taxon>
        <taxon>Gammaproteobacteria</taxon>
        <taxon>Enterobacterales</taxon>
        <taxon>Bruguierivoracaceae</taxon>
        <taxon>Sodalis</taxon>
    </lineage>
</organism>